<gene>
    <name evidence="1" type="primary">rplX</name>
    <name type="ordered locus">CBO3470</name>
    <name type="ordered locus">CLC_3414</name>
</gene>
<sequence>MSKIHVRKKDTVVVISGKDKSKIGEVLSVLPKKGKVIVKDVNVVTKHQKPNRENMQGGIIHKEAPIFSSKVMLYCDKCKSATRISNKILEDGTKVRVCKKCGETF</sequence>
<accession>A5I7J5</accession>
<accession>A7G8S7</accession>
<comment type="function">
    <text evidence="1">One of two assembly initiator proteins, it binds directly to the 5'-end of the 23S rRNA, where it nucleates assembly of the 50S subunit.</text>
</comment>
<comment type="function">
    <text evidence="1">One of the proteins that surrounds the polypeptide exit tunnel on the outside of the subunit.</text>
</comment>
<comment type="subunit">
    <text evidence="1">Part of the 50S ribosomal subunit.</text>
</comment>
<comment type="similarity">
    <text evidence="1">Belongs to the universal ribosomal protein uL24 family.</text>
</comment>
<proteinExistence type="inferred from homology"/>
<name>RL24_CLOBH</name>
<keyword id="KW-1185">Reference proteome</keyword>
<keyword id="KW-0687">Ribonucleoprotein</keyword>
<keyword id="KW-0689">Ribosomal protein</keyword>
<keyword id="KW-0694">RNA-binding</keyword>
<keyword id="KW-0699">rRNA-binding</keyword>
<evidence type="ECO:0000255" key="1">
    <source>
        <dbReference type="HAMAP-Rule" id="MF_01326"/>
    </source>
</evidence>
<evidence type="ECO:0000305" key="2"/>
<dbReference type="EMBL" id="CP000727">
    <property type="protein sequence ID" value="ABS36236.1"/>
    <property type="molecule type" value="Genomic_DNA"/>
</dbReference>
<dbReference type="EMBL" id="AM412317">
    <property type="protein sequence ID" value="CAL85030.1"/>
    <property type="molecule type" value="Genomic_DNA"/>
</dbReference>
<dbReference type="RefSeq" id="WP_003357467.1">
    <property type="nucleotide sequence ID" value="NC_009698.1"/>
</dbReference>
<dbReference type="RefSeq" id="YP_001255951.1">
    <property type="nucleotide sequence ID" value="NC_009495.1"/>
</dbReference>
<dbReference type="RefSeq" id="YP_001389192.1">
    <property type="nucleotide sequence ID" value="NC_009698.1"/>
</dbReference>
<dbReference type="SMR" id="A5I7J5"/>
<dbReference type="GeneID" id="5187724"/>
<dbReference type="KEGG" id="cbh:CLC_3414"/>
<dbReference type="KEGG" id="cbo:CBO3470"/>
<dbReference type="PATRIC" id="fig|413999.7.peg.3446"/>
<dbReference type="HOGENOM" id="CLU_093315_2_3_9"/>
<dbReference type="PRO" id="PR:A5I7J5"/>
<dbReference type="Proteomes" id="UP000001986">
    <property type="component" value="Chromosome"/>
</dbReference>
<dbReference type="GO" id="GO:0022625">
    <property type="term" value="C:cytosolic large ribosomal subunit"/>
    <property type="evidence" value="ECO:0000318"/>
    <property type="project" value="GO_Central"/>
</dbReference>
<dbReference type="GO" id="GO:0019843">
    <property type="term" value="F:rRNA binding"/>
    <property type="evidence" value="ECO:0007669"/>
    <property type="project" value="UniProtKB-UniRule"/>
</dbReference>
<dbReference type="GO" id="GO:0003735">
    <property type="term" value="F:structural constituent of ribosome"/>
    <property type="evidence" value="ECO:0007669"/>
    <property type="project" value="InterPro"/>
</dbReference>
<dbReference type="GO" id="GO:0006412">
    <property type="term" value="P:translation"/>
    <property type="evidence" value="ECO:0000318"/>
    <property type="project" value="GO_Central"/>
</dbReference>
<dbReference type="CDD" id="cd06089">
    <property type="entry name" value="KOW_RPL26"/>
    <property type="match status" value="1"/>
</dbReference>
<dbReference type="FunFam" id="2.30.30.30:FF:000004">
    <property type="entry name" value="50S ribosomal protein L24"/>
    <property type="match status" value="1"/>
</dbReference>
<dbReference type="Gene3D" id="2.30.30.30">
    <property type="match status" value="1"/>
</dbReference>
<dbReference type="HAMAP" id="MF_01326_B">
    <property type="entry name" value="Ribosomal_uL24_B"/>
    <property type="match status" value="1"/>
</dbReference>
<dbReference type="InterPro" id="IPR005824">
    <property type="entry name" value="KOW"/>
</dbReference>
<dbReference type="InterPro" id="IPR014722">
    <property type="entry name" value="Rib_uL2_dom2"/>
</dbReference>
<dbReference type="InterPro" id="IPR003256">
    <property type="entry name" value="Ribosomal_uL24"/>
</dbReference>
<dbReference type="InterPro" id="IPR041988">
    <property type="entry name" value="Ribosomal_uL24_KOW"/>
</dbReference>
<dbReference type="InterPro" id="IPR008991">
    <property type="entry name" value="Translation_prot_SH3-like_sf"/>
</dbReference>
<dbReference type="NCBIfam" id="TIGR01079">
    <property type="entry name" value="rplX_bact"/>
    <property type="match status" value="1"/>
</dbReference>
<dbReference type="PANTHER" id="PTHR12903">
    <property type="entry name" value="MITOCHONDRIAL RIBOSOMAL PROTEIN L24"/>
    <property type="match status" value="1"/>
</dbReference>
<dbReference type="Pfam" id="PF00467">
    <property type="entry name" value="KOW"/>
    <property type="match status" value="1"/>
</dbReference>
<dbReference type="Pfam" id="PF17136">
    <property type="entry name" value="ribosomal_L24"/>
    <property type="match status" value="1"/>
</dbReference>
<dbReference type="SMART" id="SM00739">
    <property type="entry name" value="KOW"/>
    <property type="match status" value="1"/>
</dbReference>
<dbReference type="SUPFAM" id="SSF50104">
    <property type="entry name" value="Translation proteins SH3-like domain"/>
    <property type="match status" value="1"/>
</dbReference>
<feature type="chain" id="PRO_0000355660" description="Large ribosomal subunit protein uL24">
    <location>
        <begin position="1"/>
        <end position="105"/>
    </location>
</feature>
<reference key="1">
    <citation type="journal article" date="2007" name="Genome Res.">
        <title>Genome sequence of a proteolytic (Group I) Clostridium botulinum strain Hall A and comparative analysis of the clostridial genomes.</title>
        <authorList>
            <person name="Sebaihia M."/>
            <person name="Peck M.W."/>
            <person name="Minton N.P."/>
            <person name="Thomson N.R."/>
            <person name="Holden M.T.G."/>
            <person name="Mitchell W.J."/>
            <person name="Carter A.T."/>
            <person name="Bentley S.D."/>
            <person name="Mason D.R."/>
            <person name="Crossman L."/>
            <person name="Paul C.J."/>
            <person name="Ivens A."/>
            <person name="Wells-Bennik M.H.J."/>
            <person name="Davis I.J."/>
            <person name="Cerdeno-Tarraga A.M."/>
            <person name="Churcher C."/>
            <person name="Quail M.A."/>
            <person name="Chillingworth T."/>
            <person name="Feltwell T."/>
            <person name="Fraser A."/>
            <person name="Goodhead I."/>
            <person name="Hance Z."/>
            <person name="Jagels K."/>
            <person name="Larke N."/>
            <person name="Maddison M."/>
            <person name="Moule S."/>
            <person name="Mungall K."/>
            <person name="Norbertczak H."/>
            <person name="Rabbinowitsch E."/>
            <person name="Sanders M."/>
            <person name="Simmonds M."/>
            <person name="White B."/>
            <person name="Whithead S."/>
            <person name="Parkhill J."/>
        </authorList>
    </citation>
    <scope>NUCLEOTIDE SEQUENCE [LARGE SCALE GENOMIC DNA]</scope>
    <source>
        <strain>Hall / ATCC 3502 / NCTC 13319 / Type A</strain>
    </source>
</reference>
<reference key="2">
    <citation type="journal article" date="2007" name="PLoS ONE">
        <title>Analysis of the neurotoxin complex genes in Clostridium botulinum A1-A4 and B1 strains: BoNT/A3, /Ba4 and /B1 clusters are located within plasmids.</title>
        <authorList>
            <person name="Smith T.J."/>
            <person name="Hill K.K."/>
            <person name="Foley B.T."/>
            <person name="Detter J.C."/>
            <person name="Munk A.C."/>
            <person name="Bruce D.C."/>
            <person name="Doggett N.A."/>
            <person name="Smith L.A."/>
            <person name="Marks J.D."/>
            <person name="Xie G."/>
            <person name="Brettin T.S."/>
        </authorList>
    </citation>
    <scope>NUCLEOTIDE SEQUENCE [LARGE SCALE GENOMIC DNA]</scope>
    <source>
        <strain>Hall / ATCC 3502 / NCTC 13319 / Type A</strain>
    </source>
</reference>
<protein>
    <recommendedName>
        <fullName evidence="1">Large ribosomal subunit protein uL24</fullName>
    </recommendedName>
    <alternativeName>
        <fullName evidence="2">50S ribosomal protein L24</fullName>
    </alternativeName>
</protein>
<organism>
    <name type="scientific">Clostridium botulinum (strain Hall / ATCC 3502 / NCTC 13319 / Type A)</name>
    <dbReference type="NCBI Taxonomy" id="441771"/>
    <lineage>
        <taxon>Bacteria</taxon>
        <taxon>Bacillati</taxon>
        <taxon>Bacillota</taxon>
        <taxon>Clostridia</taxon>
        <taxon>Eubacteriales</taxon>
        <taxon>Clostridiaceae</taxon>
        <taxon>Clostridium</taxon>
    </lineage>
</organism>